<accession>P70117</accession>
<proteinExistence type="evidence at transcript level"/>
<gene>
    <name type="primary">LGALS3BP</name>
    <name type="synonym">M2BP</name>
</gene>
<keyword id="KW-0130">Cell adhesion</keyword>
<keyword id="KW-1015">Disulfide bond</keyword>
<keyword id="KW-0272">Extracellular matrix</keyword>
<keyword id="KW-0325">Glycoprotein</keyword>
<keyword id="KW-1185">Reference proteome</keyword>
<keyword id="KW-0964">Secreted</keyword>
<keyword id="KW-0732">Signal</keyword>
<protein>
    <recommendedName>
        <fullName>Galectin-3-binding protein</fullName>
    </recommendedName>
    <alternativeName>
        <fullName>Lectin galactoside-binding soluble 3-binding protein</fullName>
    </alternativeName>
    <alternativeName>
        <fullName>Mac-2-binding protein</fullName>
        <shortName>MAC2BP</shortName>
        <shortName>Mac-2 BP</shortName>
    </alternativeName>
    <alternativeName>
        <fullName>Pancreas cancer-associated protein 4</fullName>
    </alternativeName>
</protein>
<evidence type="ECO:0000250" key="1"/>
<evidence type="ECO:0000250" key="2">
    <source>
        <dbReference type="UniProtKB" id="Q08380"/>
    </source>
</evidence>
<evidence type="ECO:0000255" key="3"/>
<evidence type="ECO:0000255" key="4">
    <source>
        <dbReference type="PROSITE-ProRule" id="PRU00037"/>
    </source>
</evidence>
<evidence type="ECO:0000255" key="5">
    <source>
        <dbReference type="PROSITE-ProRule" id="PRU00196"/>
    </source>
</evidence>
<sequence>MAFLWLFSLWLLVPGTQGTKDGDMRLVNGASANEGRVEIFYRGQWGTVCDNLWNILDANVVCRALGYENATQALGRAAFGPGRGPVMLDEVECTGTEPSLANCSSLGWLKSRCGHEKDAGVVCSNETGGVHILDLSGDLPNALGQIFDSQQGCDLFIQVTGQGHGDLTICAHKLILNTNPEAQALWQVVGSSVIMRVDAECMPVVRDFLRYFYSRRIEVTMSSVKCLHKLASAYGATQLQDYCGRLFATLLPQDPTFRTPLELYAYAQATRDSVLEDLCVQFLAWNFEPLTQAEAWLSVPTALLQALLSKSDLAVSSELDLLKAVDQWSMESSASHAEVERLLEQVRFPMVLPQELFELQFNLSLYEGHRELFQRKTMEALEFHTVPFRVLAKYRGLNLTEDTYQPRLYTSSTWSTLVTESSSRSRAAVQVYGYAQYYPYGYDSRRWYYPYQSFQTPQHPSFLFVDKLISWSATYLPTVQSCWNYGFSCTPEELPVLGLTKSSYSEPAIGYENKALMLCGGYSVVDVANFAGSKAPIPSALDTNSSKISSLFPCSSGAFSGFRVVIRPFYLTNSTDLD</sequence>
<comment type="function">
    <text evidence="2">Promotes integrin-mediated cell adhesion. May stimulate host defense against viruses and tumor cells (By similarity).</text>
</comment>
<comment type="subunit">
    <text evidence="1 2">Homodimers and homomultimers. The multimers form ring-like structures with a diameter of 30-40 nm. Binds LGALS1 and LGALS3. Binds ITGB1, COL4A1, COL5A1, COL6A1, FN1 and NID (By similarity). The unglycosylated form interacts with PDE4DIP; this interaction, which is PDE4DIP isoform-specific, may connect a pericentrosomal complex to the gamma-tubulin ring complex (gamma-TuRC) to promote microtubule assembly and acetylation (By similarity).</text>
</comment>
<comment type="subcellular location">
    <subcellularLocation>
        <location evidence="2">Secreted</location>
    </subcellularLocation>
    <subcellularLocation>
        <location evidence="2">Secreted</location>
        <location evidence="2">Extracellular space</location>
        <location evidence="2">Extracellular matrix</location>
    </subcellularLocation>
</comment>
<dbReference type="EMBL" id="U73375">
    <property type="protein sequence ID" value="AAB18745.1"/>
    <property type="molecule type" value="mRNA"/>
</dbReference>
<dbReference type="RefSeq" id="NP_001268610.1">
    <property type="nucleotide sequence ID" value="NM_001281681.1"/>
</dbReference>
<dbReference type="SMR" id="P70117"/>
<dbReference type="STRING" id="10036.ENSMAUP00000014520"/>
<dbReference type="GlyCosmos" id="P70117">
    <property type="glycosylation" value="4 sites, No reported glycans"/>
</dbReference>
<dbReference type="GeneID" id="101825995"/>
<dbReference type="KEGG" id="maua:101825995"/>
<dbReference type="CTD" id="3959"/>
<dbReference type="eggNOG" id="ENOG502QU48">
    <property type="taxonomic scope" value="Eukaryota"/>
</dbReference>
<dbReference type="OrthoDB" id="25028at2759"/>
<dbReference type="Proteomes" id="UP000189706">
    <property type="component" value="Unplaced"/>
</dbReference>
<dbReference type="GO" id="GO:0031012">
    <property type="term" value="C:extracellular matrix"/>
    <property type="evidence" value="ECO:0007669"/>
    <property type="project" value="TreeGrafter"/>
</dbReference>
<dbReference type="GO" id="GO:0005615">
    <property type="term" value="C:extracellular space"/>
    <property type="evidence" value="ECO:0007669"/>
    <property type="project" value="TreeGrafter"/>
</dbReference>
<dbReference type="GO" id="GO:0016020">
    <property type="term" value="C:membrane"/>
    <property type="evidence" value="ECO:0007669"/>
    <property type="project" value="InterPro"/>
</dbReference>
<dbReference type="GO" id="GO:0007155">
    <property type="term" value="P:cell adhesion"/>
    <property type="evidence" value="ECO:0007669"/>
    <property type="project" value="UniProtKB-KW"/>
</dbReference>
<dbReference type="FunFam" id="3.30.710.10:FF:000128">
    <property type="entry name" value="galectin-3-binding protein precursor"/>
    <property type="match status" value="1"/>
</dbReference>
<dbReference type="FunFam" id="3.10.250.10:FF:000005">
    <property type="entry name" value="Neurotrypsin isoform A"/>
    <property type="match status" value="1"/>
</dbReference>
<dbReference type="Gene3D" id="1.25.40.420">
    <property type="match status" value="1"/>
</dbReference>
<dbReference type="Gene3D" id="3.30.710.10">
    <property type="entry name" value="Potassium Channel Kv1.1, Chain A"/>
    <property type="match status" value="1"/>
</dbReference>
<dbReference type="Gene3D" id="3.10.250.10">
    <property type="entry name" value="SRCR-like domain"/>
    <property type="match status" value="1"/>
</dbReference>
<dbReference type="InterPro" id="IPR011705">
    <property type="entry name" value="BACK"/>
</dbReference>
<dbReference type="InterPro" id="IPR051481">
    <property type="entry name" value="BTB-POZ/Galectin-3-binding"/>
</dbReference>
<dbReference type="InterPro" id="IPR000210">
    <property type="entry name" value="BTB/POZ_dom"/>
</dbReference>
<dbReference type="InterPro" id="IPR011333">
    <property type="entry name" value="SKP1/BTB/POZ_sf"/>
</dbReference>
<dbReference type="InterPro" id="IPR001190">
    <property type="entry name" value="SRCR"/>
</dbReference>
<dbReference type="InterPro" id="IPR036772">
    <property type="entry name" value="SRCR-like_dom_sf"/>
</dbReference>
<dbReference type="PANTHER" id="PTHR24410:SF16">
    <property type="entry name" value="GALECTIN-3-BINDING PROTEIN"/>
    <property type="match status" value="1"/>
</dbReference>
<dbReference type="PANTHER" id="PTHR24410">
    <property type="entry name" value="HL07962P-RELATED"/>
    <property type="match status" value="1"/>
</dbReference>
<dbReference type="Pfam" id="PF07707">
    <property type="entry name" value="BACK"/>
    <property type="match status" value="1"/>
</dbReference>
<dbReference type="Pfam" id="PF00530">
    <property type="entry name" value="SRCR"/>
    <property type="match status" value="1"/>
</dbReference>
<dbReference type="PRINTS" id="PR00258">
    <property type="entry name" value="SPERACTRCPTR"/>
</dbReference>
<dbReference type="SMART" id="SM00875">
    <property type="entry name" value="BACK"/>
    <property type="match status" value="1"/>
</dbReference>
<dbReference type="SMART" id="SM00225">
    <property type="entry name" value="BTB"/>
    <property type="match status" value="1"/>
</dbReference>
<dbReference type="SMART" id="SM00202">
    <property type="entry name" value="SR"/>
    <property type="match status" value="1"/>
</dbReference>
<dbReference type="SUPFAM" id="SSF54695">
    <property type="entry name" value="POZ domain"/>
    <property type="match status" value="1"/>
</dbReference>
<dbReference type="SUPFAM" id="SSF56487">
    <property type="entry name" value="SRCR-like"/>
    <property type="match status" value="1"/>
</dbReference>
<dbReference type="PROSITE" id="PS50097">
    <property type="entry name" value="BTB"/>
    <property type="match status" value="1"/>
</dbReference>
<dbReference type="PROSITE" id="PS00420">
    <property type="entry name" value="SRCR_1"/>
    <property type="match status" value="1"/>
</dbReference>
<dbReference type="PROSITE" id="PS50287">
    <property type="entry name" value="SRCR_2"/>
    <property type="match status" value="1"/>
</dbReference>
<name>LG3BP_MESAU</name>
<reference key="1">
    <citation type="submission" date="1996-10" db="EMBL/GenBank/DDBJ databases">
        <title>Identification of blood group A-modified glycoproteins in hamster pancreatic cancer and cloning of hamster Mac-2-BP.</title>
        <authorList>
            <person name="Schaffert C."/>
            <person name="Pour P.M."/>
            <person name="MacDonald R.G."/>
            <person name="Chaney W.G."/>
        </authorList>
    </citation>
    <scope>NUCLEOTIDE SEQUENCE [MRNA]</scope>
</reference>
<organism>
    <name type="scientific">Mesocricetus auratus</name>
    <name type="common">Golden hamster</name>
    <dbReference type="NCBI Taxonomy" id="10036"/>
    <lineage>
        <taxon>Eukaryota</taxon>
        <taxon>Metazoa</taxon>
        <taxon>Chordata</taxon>
        <taxon>Craniata</taxon>
        <taxon>Vertebrata</taxon>
        <taxon>Euteleostomi</taxon>
        <taxon>Mammalia</taxon>
        <taxon>Eutheria</taxon>
        <taxon>Euarchontoglires</taxon>
        <taxon>Glires</taxon>
        <taxon>Rodentia</taxon>
        <taxon>Myomorpha</taxon>
        <taxon>Muroidea</taxon>
        <taxon>Cricetidae</taxon>
        <taxon>Cricetinae</taxon>
        <taxon>Mesocricetus</taxon>
    </lineage>
</organism>
<feature type="signal peptide" evidence="3">
    <location>
        <begin position="1"/>
        <end position="18"/>
    </location>
</feature>
<feature type="chain" id="PRO_0000357034" description="Galectin-3-binding protein">
    <location>
        <begin position="19"/>
        <end position="578"/>
    </location>
</feature>
<feature type="domain" description="SRCR" evidence="5">
    <location>
        <begin position="24"/>
        <end position="124"/>
    </location>
</feature>
<feature type="domain" description="BTB" evidence="4">
    <location>
        <begin position="153"/>
        <end position="221"/>
    </location>
</feature>
<feature type="domain" description="BACK">
    <location>
        <begin position="260"/>
        <end position="360"/>
    </location>
</feature>
<feature type="glycosylation site" description="N-linked (GlcNAc...) asparagine" evidence="3">
    <location>
        <position position="69"/>
    </location>
</feature>
<feature type="glycosylation site" description="N-linked (GlcNAc...) asparagine" evidence="3">
    <location>
        <position position="102"/>
    </location>
</feature>
<feature type="glycosylation site" description="N-linked (GlcNAc...) asparagine" evidence="3">
    <location>
        <position position="362"/>
    </location>
</feature>
<feature type="glycosylation site" description="N-linked (GlcNAc...) asparagine" evidence="3">
    <location>
        <position position="398"/>
    </location>
</feature>
<feature type="disulfide bond" evidence="5">
    <location>
        <begin position="49"/>
        <end position="113"/>
    </location>
</feature>
<feature type="disulfide bond" evidence="5">
    <location>
        <begin position="62"/>
        <end position="123"/>
    </location>
</feature>
<feature type="disulfide bond" evidence="5">
    <location>
        <begin position="93"/>
        <end position="103"/>
    </location>
</feature>